<sequence length="129" mass="13988">MSGRGKQGGKARAKAKSRSSRAGLQFPVGRVHRLLRKGNYAERVGAGAPVYMAAVLEYLTAEILELAGNAARDNKKTRIIPRHLQLAIRNDEELNKLLGKVTIAQGGVLPNIQAVLLPKKTESHKAKSK</sequence>
<gene>
    <name evidence="5" type="primary">H2AC20</name>
</gene>
<dbReference type="EMBL" id="BC126824">
    <property type="protein sequence ID" value="AAI26825.1"/>
    <property type="molecule type" value="mRNA"/>
</dbReference>
<dbReference type="RefSeq" id="NP_001075189.1">
    <property type="nucleotide sequence ID" value="NM_001081720.2"/>
</dbReference>
<dbReference type="SMR" id="A1A4R1"/>
<dbReference type="BioGRID" id="170293">
    <property type="interactions" value="3"/>
</dbReference>
<dbReference type="FunCoup" id="A1A4R1">
    <property type="interactions" value="1076"/>
</dbReference>
<dbReference type="STRING" id="9913.ENSBTAP00000052035"/>
<dbReference type="PeptideAtlas" id="A1A4R1"/>
<dbReference type="Ensembl" id="ENSBTAT00000046028.3">
    <property type="protein sequence ID" value="ENSBTAP00000043357.3"/>
    <property type="gene ID" value="ENSBTAG00000050122.2"/>
</dbReference>
<dbReference type="Ensembl" id="ENSBTAT00000084598.2">
    <property type="protein sequence ID" value="ENSBTAP00000068150.2"/>
    <property type="gene ID" value="ENSBTAG00000050122.2"/>
</dbReference>
<dbReference type="GeneID" id="513666"/>
<dbReference type="KEGG" id="bta:513666"/>
<dbReference type="CTD" id="8338"/>
<dbReference type="GeneTree" id="ENSGT00940000153118"/>
<dbReference type="InParanoid" id="A1A4R1"/>
<dbReference type="OrthoDB" id="9710282at2759"/>
<dbReference type="Proteomes" id="UP000009136">
    <property type="component" value="Chromosome 3"/>
</dbReference>
<dbReference type="GO" id="GO:0000786">
    <property type="term" value="C:nucleosome"/>
    <property type="evidence" value="ECO:0000318"/>
    <property type="project" value="GO_Central"/>
</dbReference>
<dbReference type="GO" id="GO:0005634">
    <property type="term" value="C:nucleus"/>
    <property type="evidence" value="ECO:0000318"/>
    <property type="project" value="GO_Central"/>
</dbReference>
<dbReference type="GO" id="GO:0003677">
    <property type="term" value="F:DNA binding"/>
    <property type="evidence" value="ECO:0007669"/>
    <property type="project" value="UniProtKB-KW"/>
</dbReference>
<dbReference type="GO" id="GO:0046982">
    <property type="term" value="F:protein heterodimerization activity"/>
    <property type="evidence" value="ECO:0007669"/>
    <property type="project" value="InterPro"/>
</dbReference>
<dbReference type="GO" id="GO:0030527">
    <property type="term" value="F:structural constituent of chromatin"/>
    <property type="evidence" value="ECO:0000318"/>
    <property type="project" value="GO_Central"/>
</dbReference>
<dbReference type="GO" id="GO:0031507">
    <property type="term" value="P:heterochromatin formation"/>
    <property type="evidence" value="ECO:0000318"/>
    <property type="project" value="GO_Central"/>
</dbReference>
<dbReference type="CDD" id="cd00074">
    <property type="entry name" value="HFD_H2A"/>
    <property type="match status" value="1"/>
</dbReference>
<dbReference type="FunFam" id="1.10.20.10:FF:000004">
    <property type="entry name" value="Histone H2A"/>
    <property type="match status" value="1"/>
</dbReference>
<dbReference type="Gene3D" id="1.10.20.10">
    <property type="entry name" value="Histone, subunit A"/>
    <property type="match status" value="1"/>
</dbReference>
<dbReference type="InterPro" id="IPR009072">
    <property type="entry name" value="Histone-fold"/>
</dbReference>
<dbReference type="InterPro" id="IPR002119">
    <property type="entry name" value="Histone_H2A"/>
</dbReference>
<dbReference type="InterPro" id="IPR007125">
    <property type="entry name" value="Histone_H2A/H2B/H3"/>
</dbReference>
<dbReference type="InterPro" id="IPR032454">
    <property type="entry name" value="Histone_H2A_C"/>
</dbReference>
<dbReference type="InterPro" id="IPR032458">
    <property type="entry name" value="Histone_H2A_CS"/>
</dbReference>
<dbReference type="PANTHER" id="PTHR23430">
    <property type="entry name" value="HISTONE H2A"/>
    <property type="match status" value="1"/>
</dbReference>
<dbReference type="Pfam" id="PF00125">
    <property type="entry name" value="Histone"/>
    <property type="match status" value="1"/>
</dbReference>
<dbReference type="Pfam" id="PF16211">
    <property type="entry name" value="Histone_H2A_C"/>
    <property type="match status" value="1"/>
</dbReference>
<dbReference type="PRINTS" id="PR00620">
    <property type="entry name" value="HISTONEH2A"/>
</dbReference>
<dbReference type="SMART" id="SM00414">
    <property type="entry name" value="H2A"/>
    <property type="match status" value="1"/>
</dbReference>
<dbReference type="SUPFAM" id="SSF47113">
    <property type="entry name" value="Histone-fold"/>
    <property type="match status" value="1"/>
</dbReference>
<dbReference type="PROSITE" id="PS00046">
    <property type="entry name" value="HISTONE_H2A"/>
    <property type="match status" value="1"/>
</dbReference>
<name>H2A2C_BOVIN</name>
<proteinExistence type="evidence at transcript level"/>
<accession>A1A4R1</accession>
<organism>
    <name type="scientific">Bos taurus</name>
    <name type="common">Bovine</name>
    <dbReference type="NCBI Taxonomy" id="9913"/>
    <lineage>
        <taxon>Eukaryota</taxon>
        <taxon>Metazoa</taxon>
        <taxon>Chordata</taxon>
        <taxon>Craniata</taxon>
        <taxon>Vertebrata</taxon>
        <taxon>Euteleostomi</taxon>
        <taxon>Mammalia</taxon>
        <taxon>Eutheria</taxon>
        <taxon>Laurasiatheria</taxon>
        <taxon>Artiodactyla</taxon>
        <taxon>Ruminantia</taxon>
        <taxon>Pecora</taxon>
        <taxon>Bovidae</taxon>
        <taxon>Bovinae</taxon>
        <taxon>Bos</taxon>
    </lineage>
</organism>
<keyword id="KW-0007">Acetylation</keyword>
<keyword id="KW-0158">Chromosome</keyword>
<keyword id="KW-0164">Citrullination</keyword>
<keyword id="KW-0238">DNA-binding</keyword>
<keyword id="KW-0379">Hydroxylation</keyword>
<keyword id="KW-1017">Isopeptide bond</keyword>
<keyword id="KW-0488">Methylation</keyword>
<keyword id="KW-0544">Nucleosome core</keyword>
<keyword id="KW-0539">Nucleus</keyword>
<keyword id="KW-0597">Phosphoprotein</keyword>
<keyword id="KW-1185">Reference proteome</keyword>
<keyword id="KW-0832">Ubl conjugation</keyword>
<feature type="initiator methionine" description="Removed" evidence="5">
    <location>
        <position position="1"/>
    </location>
</feature>
<feature type="chain" id="PRO_0000281917" description="Histone H2A type 2-C">
    <location>
        <begin position="2"/>
        <end position="129"/>
    </location>
</feature>
<feature type="region of interest" description="Disordered" evidence="7">
    <location>
        <begin position="1"/>
        <end position="22"/>
    </location>
</feature>
<feature type="compositionally biased region" description="Basic residues" evidence="7">
    <location>
        <begin position="7"/>
        <end position="19"/>
    </location>
</feature>
<feature type="modified residue" description="N-acetylserine" evidence="5">
    <location>
        <position position="2"/>
    </location>
</feature>
<feature type="modified residue" description="Phosphoserine; by RPS6KA5" evidence="3">
    <location>
        <position position="2"/>
    </location>
</feature>
<feature type="modified residue" description="Citrulline; alternate" evidence="3">
    <location>
        <position position="4"/>
    </location>
</feature>
<feature type="modified residue" description="Symmetric dimethylarginine; by PRMT5; alternate" evidence="6">
    <location>
        <position position="4"/>
    </location>
</feature>
<feature type="modified residue" description="N6-(2-hydroxyisobutyryl)lysine; alternate" evidence="3">
    <location>
        <position position="6"/>
    </location>
</feature>
<feature type="modified residue" description="N6-acetyllysine; alternate" evidence="5">
    <location>
        <position position="6"/>
    </location>
</feature>
<feature type="modified residue" description="N6-(2-hydroxyisobutyryl)lysine; alternate" evidence="3">
    <location>
        <position position="10"/>
    </location>
</feature>
<feature type="modified residue" description="N6-lactoyllysine; alternate" evidence="2">
    <location>
        <position position="10"/>
    </location>
</feature>
<feature type="modified residue" description="N6-succinyllysine; alternate" evidence="5">
    <location>
        <position position="10"/>
    </location>
</feature>
<feature type="modified residue" description="N6-(2-hydroxyisobutyryl)lysine; alternate" evidence="3">
    <location>
        <position position="37"/>
    </location>
</feature>
<feature type="modified residue" description="N6-(beta-hydroxybutyryl)lysine; alternate" evidence="1">
    <location>
        <position position="37"/>
    </location>
</feature>
<feature type="modified residue" description="N6-crotonyllysine; alternate" evidence="3">
    <location>
        <position position="37"/>
    </location>
</feature>
<feature type="modified residue" description="N6-(2-hydroxyisobutyryl)lysine" evidence="3">
    <location>
        <position position="75"/>
    </location>
</feature>
<feature type="modified residue" description="N6-(2-hydroxyisobutyryl)lysine" evidence="3">
    <location>
        <position position="76"/>
    </location>
</feature>
<feature type="modified residue" description="N6-(2-hydroxyisobutyryl)lysine; alternate" evidence="3">
    <location>
        <position position="96"/>
    </location>
</feature>
<feature type="modified residue" description="N6-glutaryllysine; alternate" evidence="3">
    <location>
        <position position="96"/>
    </location>
</feature>
<feature type="modified residue" description="N6-succinyllysine; alternate" evidence="5">
    <location>
        <position position="96"/>
    </location>
</feature>
<feature type="modified residue" description="N6-glutaryllysine" evidence="3">
    <location>
        <position position="100"/>
    </location>
</feature>
<feature type="modified residue" description="N5-methylglutamine" evidence="3">
    <location>
        <position position="105"/>
    </location>
</feature>
<feature type="modified residue" description="N6-(2-hydroxyisobutyryl)lysine; alternate" evidence="3">
    <location>
        <position position="119"/>
    </location>
</feature>
<feature type="modified residue" description="N6-crotonyllysine; alternate" evidence="3">
    <location>
        <position position="119"/>
    </location>
</feature>
<feature type="modified residue" description="N6-glutaryllysine; alternate" evidence="3">
    <location>
        <position position="119"/>
    </location>
</feature>
<feature type="modified residue" description="N6-crotonyllysine; alternate" evidence="3">
    <location>
        <position position="120"/>
    </location>
</feature>
<feature type="modified residue" description="N6-glutaryllysine; alternate" evidence="3">
    <location>
        <position position="120"/>
    </location>
</feature>
<feature type="modified residue" description="Phosphothreonine; by DCAF1" evidence="5">
    <location>
        <position position="121"/>
    </location>
</feature>
<feature type="modified residue" description="Phosphoserine" evidence="5">
    <location>
        <position position="123"/>
    </location>
</feature>
<feature type="modified residue" description="N6-crotonyllysine" evidence="3">
    <location>
        <position position="125"/>
    </location>
</feature>
<feature type="cross-link" description="Glycyl lysine isopeptide (Lys-Gly) (interchain with G-Cter in ubiquitin)" evidence="5">
    <location>
        <position position="14"/>
    </location>
</feature>
<feature type="cross-link" description="Glycyl lysine isopeptide (Lys-Gly) (interchain with G-Cter in ubiquitin)" evidence="5">
    <location>
        <position position="16"/>
    </location>
</feature>
<feature type="cross-link" description="Glycyl lysine isopeptide (Lys-Gly) (interchain with G-Cter in ubiquitin); alternate" evidence="5">
    <location>
        <position position="120"/>
    </location>
</feature>
<protein>
    <recommendedName>
        <fullName>Histone H2A type 2-C</fullName>
    </recommendedName>
    <alternativeName>
        <fullName evidence="5">H2A-clustered histone 20</fullName>
    </alternativeName>
</protein>
<reference key="1">
    <citation type="submission" date="2006-10" db="EMBL/GenBank/DDBJ databases">
        <authorList>
            <consortium name="NIH - Mammalian Gene Collection (MGC) project"/>
        </authorList>
    </citation>
    <scope>NUCLEOTIDE SEQUENCE [LARGE SCALE MRNA]</scope>
    <source>
        <strain>Hereford</strain>
        <tissue>Fetal lung</tissue>
    </source>
</reference>
<evidence type="ECO:0000250" key="1">
    <source>
        <dbReference type="UniProtKB" id="C0HKE1"/>
    </source>
</evidence>
<evidence type="ECO:0000250" key="2">
    <source>
        <dbReference type="UniProtKB" id="P0C0S5"/>
    </source>
</evidence>
<evidence type="ECO:0000250" key="3">
    <source>
        <dbReference type="UniProtKB" id="P0C0S8"/>
    </source>
</evidence>
<evidence type="ECO:0000250" key="4">
    <source>
        <dbReference type="UniProtKB" id="P22752"/>
    </source>
</evidence>
<evidence type="ECO:0000250" key="5">
    <source>
        <dbReference type="UniProtKB" id="Q16777"/>
    </source>
</evidence>
<evidence type="ECO:0000250" key="6">
    <source>
        <dbReference type="UniProtKB" id="Q64523"/>
    </source>
</evidence>
<evidence type="ECO:0000256" key="7">
    <source>
        <dbReference type="SAM" id="MobiDB-lite"/>
    </source>
</evidence>
<evidence type="ECO:0000305" key="8"/>
<comment type="function">
    <text>Core component of nucleosome. Nucleosomes wrap and compact DNA into chromatin, limiting DNA accessibility to the cellular machineries which require DNA as a template. Histones thereby play a central role in transcription regulation, DNA repair, DNA replication and chromosomal stability. DNA accessibility is regulated via a complex set of post-translational modifications of histones, also called histone code, and nucleosome remodeling.</text>
</comment>
<comment type="subunit">
    <text>The nucleosome is a histone octamer containing two molecules each of H2A, H2B, H3 and H4 assembled in one H3-H4 heterotetramer and two H2A-H2B heterodimers. The octamer wraps approximately 147 bp of DNA.</text>
</comment>
<comment type="subcellular location">
    <subcellularLocation>
        <location>Nucleus</location>
    </subcellularLocation>
    <subcellularLocation>
        <location>Chromosome</location>
    </subcellularLocation>
</comment>
<comment type="PTM">
    <text evidence="3">Deiminated on Arg-4 in granulocytes upon calcium entry.</text>
</comment>
<comment type="PTM">
    <text evidence="3">Monoubiquitination of Lys-120 (H2AK119Ub) by RING1, TRIM37 and RNF2/RING2 complex gives a specific tag for epigenetic transcriptional repression and participates in X chromosome inactivation of female mammals. It is involved in the initiation of both imprinted and random X inactivation. Ubiquitinated H2A is enriched in inactive X chromosome chromatin. Ubiquitination of H2A functions downstream of methylation of 'Lys-27' of histone H3 (H3K27me). H2AK119Ub by RNF2/RING2 can also be induced by ultraviolet and may be involved in DNA repair. Following DNA double-strand breaks (DSBs), it is ubiquitinated through 'Lys-63' linkage of ubiquitin moieties by the E2 ligase UBE2N and the E3 ligases RNF8 and RNF168, leading to the recruitment of repair proteins to sites of DNA damage. Ubiquitination at Lys-14 and Lys-16 (H2AK13Ub and H2AK15Ub, respectively) in response to DNA damage is initiated by RNF168 that mediates monoubiquitination at these 2 sites, and 'Lys-63'-linked ubiquitin are then conjugated to monoubiquitin; RNF8 is able to extend 'Lys-63'-linked ubiquitin chains in vitro. H2AK119Ub and ionizing radiation-induced 'Lys-63'-linked ubiquitination (H2AK13Ub and H2AK15Ub) are distinct events.</text>
</comment>
<comment type="PTM">
    <text evidence="3">Phosphorylation on Ser-2 (H2AS1ph) is enhanced during mitosis. Phosphorylation on Ser-2 by RPS6KA5/MSK1 directly represses transcription. Acetylation of H3 inhibits Ser-2 phosphorylation by RPS6KA5/MSK1. Phosphorylation at Thr-121 (H2AT120ph) by DCAF1 is present in the regulatory region of many tumor suppresor genes and down-regulates their transcription.</text>
</comment>
<comment type="PTM">
    <text evidence="4">Symmetric dimethylation on Arg-4 by the PRDM1/PRMT5 complex may play a crucial role in the germ-cell lineage.</text>
</comment>
<comment type="PTM">
    <text evidence="3">Glutamine methylation at Gln-105 (H2AQ104me) by FBL is specifically dedicated to polymerase I. It is present at 35S ribosomal DNA locus and impairs binding of the FACT complex.</text>
</comment>
<comment type="PTM">
    <text evidence="3">Crotonylation (Kcr) is specifically present in male germ cells and marks testis-specific genes in post-meiotic cells, including X-linked genes that escape sex chromosome inactivation in haploid cells. Crotonylation marks active promoters and enhancers and confers resistance to transcriptional repressors. It is also associated with post-meiotically activated genes on autosomes.</text>
</comment>
<comment type="PTM">
    <text evidence="2">Lactylated in macrophages by EP300/P300 by using lactoyl-CoA directly derived from endogenous or exogenous lactate, leading to stimulates gene transcription.</text>
</comment>
<comment type="similarity">
    <text evidence="8">Belongs to the histone H2A family.</text>
</comment>